<protein>
    <recommendedName>
        <fullName>ATP synthase subunit alpha, mitochondrial</fullName>
    </recommendedName>
</protein>
<feature type="chain" id="PRO_0000144408" description="ATP synthase subunit alpha, mitochondrial">
    <location>
        <begin position="1"/>
        <end position="508"/>
    </location>
</feature>
<feature type="binding site" evidence="1">
    <location>
        <begin position="171"/>
        <end position="178"/>
    </location>
    <ligand>
        <name>ATP</name>
        <dbReference type="ChEBI" id="CHEBI:30616"/>
    </ligand>
</feature>
<feature type="site" description="Required for activity" evidence="1">
    <location>
        <position position="373"/>
    </location>
</feature>
<evidence type="ECO:0000250" key="1"/>
<evidence type="ECO:0000305" key="2"/>
<name>ATPAM_SOYBN</name>
<reference key="1">
    <citation type="journal article" date="1993" name="Curr. Genet.">
        <title>Complex organization of the soybean mitochondrial genome: recombination repeats and multiple transcripts at the atpA loci.</title>
        <authorList>
            <person name="Chanut F.A."/>
            <person name="Grabau E.A."/>
            <person name="Gesteland R.F."/>
        </authorList>
    </citation>
    <scope>NUCLEOTIDE SEQUENCE [GENOMIC DNA]</scope>
    <source>
        <strain>cv. Williams 82</strain>
        <tissue>Hypocotyl</tissue>
    </source>
</reference>
<reference key="2">
    <citation type="journal article" date="2013" name="PLoS ONE">
        <title>The mitochondrial genome of soybean reveals complex genome structures and gene evolution at intercellular and phylogenetic levels.</title>
        <authorList>
            <person name="Chang S."/>
            <person name="Wang Y."/>
            <person name="Lu J."/>
            <person name="Gai J."/>
            <person name="Li J."/>
            <person name="Chu P."/>
            <person name="Guan R."/>
            <person name="Zhao T."/>
        </authorList>
    </citation>
    <scope>NUCLEOTIDE SEQUENCE [LARGE SCALE GENOMIC DNA]</scope>
    <source>
        <strain>cv. Aiganhuang</strain>
        <tissue>Etiolated seedling</tissue>
    </source>
</reference>
<sequence>MEFSVRAAELTTLLESRITNFYTNFQVDEIGRVVSVGDGIARVYGLNEIQAGEMVEFASGVKGIALNLENENVGIVVFGSDTAIKEGDLVKRTGSIVDVPAGKAMLGRVVDALGVPIDGRGALSDHERRRVEVKAPGIIERKSVHEPMQTGLKAVDSLVPIGRGQRELIIGDRQTGKTAIAIDTILNQKQMNSRATSESETLYCVYVAIGQKRSTVAQLVQILSEANALEYSILVAATASDPAPLQFLAPYSGCAMGEYFRDNGMHALIIYDDLSKQAVAYRQMSLLLRRPPGREAFPGDVFYLHSRLLERAAKRSDQTGAGSLTALPVIETQAGDVSAYIPTNVISITDGQICLETELFYRGIRPAINVGLSVSRVGSAAQLKAMKQVCGSLKLELAQYREVAAFAQFGSDLDAATQALLNRGARLTEVLKQPQYAPLPIEKQILVIYAAVNGFCDRMPLDKIPQYERDILTTIKPELLQSLKGGLTSERKIELEKFLKEKGGTYYI</sequence>
<geneLocation type="mitochondrion"/>
<comment type="function">
    <text evidence="1">Mitochondrial membrane ATP synthase (F(1)F(0) ATP synthase or Complex V) produces ATP from ADP in the presence of a proton gradient across the membrane which is generated by electron transport complexes of the respiratory chain. F-type ATPases consist of two structural domains, F(1) - containing the extramembraneous catalytic core, and F(0) - containing the membrane proton channel, linked together by a central stalk and a peripheral stalk. During catalysis, ATP synthesis in the catalytic domain of F(1) is coupled via a rotary mechanism of the central stalk subunits to proton translocation. Subunits alpha and beta form the catalytic core in F(1). Rotation of the central stalk against the surrounding alpha(3)beta(3) subunits leads to hydrolysis of ATP in three separate catalytic sites on the beta subunits. Subunit alpha does not bear the catalytic high-affinity ATP-binding sites (By similarity).</text>
</comment>
<comment type="subunit">
    <text>F-type ATPases have 2 components, CF(1) - the catalytic core - and CF(0) - the membrane proton channel. CF(1) has five subunits: alpha(3), beta(3), gamma(1), delta(1), epsilon(1). CF(0) has three main subunits: a, b and c.</text>
</comment>
<comment type="subcellular location">
    <subcellularLocation>
        <location>Mitochondrion</location>
    </subcellularLocation>
    <subcellularLocation>
        <location>Mitochondrion inner membrane</location>
    </subcellularLocation>
    <text>Peripheral membrane protein.</text>
</comment>
<comment type="similarity">
    <text evidence="2">Belongs to the ATPase alpha/beta chains family.</text>
</comment>
<organism>
    <name type="scientific">Glycine max</name>
    <name type="common">Soybean</name>
    <name type="synonym">Glycine hispida</name>
    <dbReference type="NCBI Taxonomy" id="3847"/>
    <lineage>
        <taxon>Eukaryota</taxon>
        <taxon>Viridiplantae</taxon>
        <taxon>Streptophyta</taxon>
        <taxon>Embryophyta</taxon>
        <taxon>Tracheophyta</taxon>
        <taxon>Spermatophyta</taxon>
        <taxon>Magnoliopsida</taxon>
        <taxon>eudicotyledons</taxon>
        <taxon>Gunneridae</taxon>
        <taxon>Pentapetalae</taxon>
        <taxon>rosids</taxon>
        <taxon>fabids</taxon>
        <taxon>Fabales</taxon>
        <taxon>Fabaceae</taxon>
        <taxon>Papilionoideae</taxon>
        <taxon>50 kb inversion clade</taxon>
        <taxon>NPAAA clade</taxon>
        <taxon>indigoferoid/millettioid clade</taxon>
        <taxon>Phaseoleae</taxon>
        <taxon>Glycine</taxon>
        <taxon>Glycine subgen. Soja</taxon>
    </lineage>
</organism>
<keyword id="KW-0066">ATP synthesis</keyword>
<keyword id="KW-0067">ATP-binding</keyword>
<keyword id="KW-0139">CF(1)</keyword>
<keyword id="KW-0375">Hydrogen ion transport</keyword>
<keyword id="KW-0406">Ion transport</keyword>
<keyword id="KW-0472">Membrane</keyword>
<keyword id="KW-0496">Mitochondrion</keyword>
<keyword id="KW-0999">Mitochondrion inner membrane</keyword>
<keyword id="KW-0547">Nucleotide-binding</keyword>
<keyword id="KW-1185">Reference proteome</keyword>
<keyword id="KW-0813">Transport</keyword>
<accession>Q01915</accession>
<accession>M1FPH1</accession>
<dbReference type="EMBL" id="Z14031">
    <property type="protein sequence ID" value="CAA78407.1"/>
    <property type="molecule type" value="Genomic_DNA"/>
</dbReference>
<dbReference type="EMBL" id="JX463295">
    <property type="protein sequence ID" value="AFR34317.1"/>
    <property type="molecule type" value="Genomic_DNA"/>
</dbReference>
<dbReference type="EMBL" id="JX463295">
    <property type="protein sequence ID" value="AFR34321.1"/>
    <property type="molecule type" value="Genomic_DNA"/>
</dbReference>
<dbReference type="EMBL" id="JX463295">
    <property type="protein sequence ID" value="AFR34327.1"/>
    <property type="molecule type" value="Genomic_DNA"/>
</dbReference>
<dbReference type="PIR" id="S29792">
    <property type="entry name" value="S29792"/>
</dbReference>
<dbReference type="RefSeq" id="YP_007516887.1">
    <property type="nucleotide sequence ID" value="NC_020455.1"/>
</dbReference>
<dbReference type="RefSeq" id="YP_007516904.1">
    <property type="nucleotide sequence ID" value="NC_020455.1"/>
</dbReference>
<dbReference type="RefSeq" id="YP_007516927.1">
    <property type="nucleotide sequence ID" value="NC_020455.1"/>
</dbReference>
<dbReference type="SMR" id="Q01915"/>
<dbReference type="FunCoup" id="Q01915">
    <property type="interactions" value="3389"/>
</dbReference>
<dbReference type="STRING" id="3847.Q01915"/>
<dbReference type="ProMEX" id="Q01915"/>
<dbReference type="GeneID" id="15308543"/>
<dbReference type="GeneID" id="15308608"/>
<dbReference type="GeneID" id="15308624"/>
<dbReference type="KEGG" id="gmx:15308543"/>
<dbReference type="KEGG" id="gmx:15308608"/>
<dbReference type="KEGG" id="gmx:15308624"/>
<dbReference type="InParanoid" id="Q01915"/>
<dbReference type="Proteomes" id="UP000008827">
    <property type="component" value="Mitochondrion"/>
</dbReference>
<dbReference type="GO" id="GO:0005743">
    <property type="term" value="C:mitochondrial inner membrane"/>
    <property type="evidence" value="ECO:0007669"/>
    <property type="project" value="UniProtKB-SubCell"/>
</dbReference>
<dbReference type="GO" id="GO:0045259">
    <property type="term" value="C:proton-transporting ATP synthase complex"/>
    <property type="evidence" value="ECO:0007669"/>
    <property type="project" value="UniProtKB-KW"/>
</dbReference>
<dbReference type="GO" id="GO:0043531">
    <property type="term" value="F:ADP binding"/>
    <property type="evidence" value="ECO:0000318"/>
    <property type="project" value="GO_Central"/>
</dbReference>
<dbReference type="GO" id="GO:0005524">
    <property type="term" value="F:ATP binding"/>
    <property type="evidence" value="ECO:0000318"/>
    <property type="project" value="GO_Central"/>
</dbReference>
<dbReference type="GO" id="GO:0046933">
    <property type="term" value="F:proton-transporting ATP synthase activity, rotational mechanism"/>
    <property type="evidence" value="ECO:0007669"/>
    <property type="project" value="InterPro"/>
</dbReference>
<dbReference type="GO" id="GO:0015986">
    <property type="term" value="P:proton motive force-driven ATP synthesis"/>
    <property type="evidence" value="ECO:0000318"/>
    <property type="project" value="GO_Central"/>
</dbReference>
<dbReference type="CDD" id="cd18113">
    <property type="entry name" value="ATP-synt_F1_alpha_C"/>
    <property type="match status" value="1"/>
</dbReference>
<dbReference type="CDD" id="cd18116">
    <property type="entry name" value="ATP-synt_F1_alpha_N"/>
    <property type="match status" value="1"/>
</dbReference>
<dbReference type="CDD" id="cd01132">
    <property type="entry name" value="F1-ATPase_alpha_CD"/>
    <property type="match status" value="1"/>
</dbReference>
<dbReference type="FunFam" id="1.20.150.20:FF:000001">
    <property type="entry name" value="ATP synthase subunit alpha"/>
    <property type="match status" value="1"/>
</dbReference>
<dbReference type="FunFam" id="2.40.30.20:FF:000001">
    <property type="entry name" value="ATP synthase subunit alpha"/>
    <property type="match status" value="1"/>
</dbReference>
<dbReference type="FunFam" id="3.40.50.300:FF:002432">
    <property type="entry name" value="ATP synthase subunit alpha, mitochondrial"/>
    <property type="match status" value="1"/>
</dbReference>
<dbReference type="Gene3D" id="2.40.30.20">
    <property type="match status" value="1"/>
</dbReference>
<dbReference type="Gene3D" id="1.20.150.20">
    <property type="entry name" value="ATP synthase alpha/beta chain, C-terminal domain"/>
    <property type="match status" value="1"/>
</dbReference>
<dbReference type="Gene3D" id="3.40.50.300">
    <property type="entry name" value="P-loop containing nucleotide triphosphate hydrolases"/>
    <property type="match status" value="1"/>
</dbReference>
<dbReference type="HAMAP" id="MF_01346">
    <property type="entry name" value="ATP_synth_alpha_bact"/>
    <property type="match status" value="1"/>
</dbReference>
<dbReference type="InterPro" id="IPR023366">
    <property type="entry name" value="ATP_synth_asu-like_sf"/>
</dbReference>
<dbReference type="InterPro" id="IPR000793">
    <property type="entry name" value="ATP_synth_asu_C"/>
</dbReference>
<dbReference type="InterPro" id="IPR038376">
    <property type="entry name" value="ATP_synth_asu_C_sf"/>
</dbReference>
<dbReference type="InterPro" id="IPR033732">
    <property type="entry name" value="ATP_synth_F1_a_nt-bd_dom"/>
</dbReference>
<dbReference type="InterPro" id="IPR005294">
    <property type="entry name" value="ATP_synth_F1_asu"/>
</dbReference>
<dbReference type="InterPro" id="IPR020003">
    <property type="entry name" value="ATPase_a/bsu_AS"/>
</dbReference>
<dbReference type="InterPro" id="IPR004100">
    <property type="entry name" value="ATPase_F1/V1/A1_a/bsu_N"/>
</dbReference>
<dbReference type="InterPro" id="IPR036121">
    <property type="entry name" value="ATPase_F1/V1/A1_a/bsu_N_sf"/>
</dbReference>
<dbReference type="InterPro" id="IPR000194">
    <property type="entry name" value="ATPase_F1/V1/A1_a/bsu_nucl-bd"/>
</dbReference>
<dbReference type="InterPro" id="IPR027417">
    <property type="entry name" value="P-loop_NTPase"/>
</dbReference>
<dbReference type="NCBIfam" id="TIGR00962">
    <property type="entry name" value="atpA"/>
    <property type="match status" value="1"/>
</dbReference>
<dbReference type="NCBIfam" id="NF009884">
    <property type="entry name" value="PRK13343.1"/>
    <property type="match status" value="1"/>
</dbReference>
<dbReference type="PANTHER" id="PTHR48082">
    <property type="entry name" value="ATP SYNTHASE SUBUNIT ALPHA, MITOCHONDRIAL"/>
    <property type="match status" value="1"/>
</dbReference>
<dbReference type="PANTHER" id="PTHR48082:SF2">
    <property type="entry name" value="ATP SYNTHASE SUBUNIT ALPHA, MITOCHONDRIAL"/>
    <property type="match status" value="1"/>
</dbReference>
<dbReference type="Pfam" id="PF00006">
    <property type="entry name" value="ATP-synt_ab"/>
    <property type="match status" value="1"/>
</dbReference>
<dbReference type="Pfam" id="PF00306">
    <property type="entry name" value="ATP-synt_ab_C"/>
    <property type="match status" value="1"/>
</dbReference>
<dbReference type="Pfam" id="PF02874">
    <property type="entry name" value="ATP-synt_ab_N"/>
    <property type="match status" value="1"/>
</dbReference>
<dbReference type="PIRSF" id="PIRSF039088">
    <property type="entry name" value="F_ATPase_subunit_alpha"/>
    <property type="match status" value="1"/>
</dbReference>
<dbReference type="SUPFAM" id="SSF47917">
    <property type="entry name" value="C-terminal domain of alpha and beta subunits of F1 ATP synthase"/>
    <property type="match status" value="1"/>
</dbReference>
<dbReference type="SUPFAM" id="SSF50615">
    <property type="entry name" value="N-terminal domain of alpha and beta subunits of F1 ATP synthase"/>
    <property type="match status" value="1"/>
</dbReference>
<dbReference type="SUPFAM" id="SSF52540">
    <property type="entry name" value="P-loop containing nucleoside triphosphate hydrolases"/>
    <property type="match status" value="1"/>
</dbReference>
<dbReference type="PROSITE" id="PS00152">
    <property type="entry name" value="ATPASE_ALPHA_BETA"/>
    <property type="match status" value="1"/>
</dbReference>
<proteinExistence type="inferred from homology"/>
<gene>
    <name type="primary">ATPA</name>
    <name type="synonym">atp1-1</name>
    <name type="synonym">atp1-2</name>
    <name type="synonym">atp1-3</name>
    <name type="ORF">GlmaxMp39</name>
    <name type="ORF">GlmaxMp55</name>
    <name type="ORF">GlmaxMp78</name>
</gene>